<gene>
    <name type="primary">crisp-a</name>
</gene>
<organism>
    <name type="scientific">Xenopus tropicalis</name>
    <name type="common">Western clawed frog</name>
    <name type="synonym">Silurana tropicalis</name>
    <dbReference type="NCBI Taxonomy" id="8364"/>
    <lineage>
        <taxon>Eukaryota</taxon>
        <taxon>Metazoa</taxon>
        <taxon>Chordata</taxon>
        <taxon>Craniata</taxon>
        <taxon>Vertebrata</taxon>
        <taxon>Euteleostomi</taxon>
        <taxon>Amphibia</taxon>
        <taxon>Batrachia</taxon>
        <taxon>Anura</taxon>
        <taxon>Pipoidea</taxon>
        <taxon>Pipidae</taxon>
        <taxon>Xenopodinae</taxon>
        <taxon>Xenopus</taxon>
        <taxon>Silurana</taxon>
    </lineage>
</organism>
<proteinExistence type="evidence at protein level"/>
<evidence type="ECO:0000255" key="1"/>
<evidence type="ECO:0000269" key="2">
    <source>
    </source>
</evidence>
<evidence type="ECO:0000305" key="3"/>
<sequence length="204" mass="22655">MDTFNFIICISALFHSTYGDDGGTPMLDTETQNYLVDLHNLLRRSVDPTAKDMLKMEWSPGAALNAQNAAAKCVMQHSSATERQIQDPFNYVCGENIYVTTAKPDWAAAVNSWFNERNDFTYGVGPNSDKMIGHYTQVAWAKTYLLGCGLAFCPGNYYPYVSICHYCPMGNMINSIKTPYEAGEWCASCPESCEDKLCTSNPTA</sequence>
<keyword id="KW-0472">Membrane</keyword>
<keyword id="KW-1185">Reference proteome</keyword>
<keyword id="KW-0964">Secreted</keyword>
<keyword id="KW-0732">Signal</keyword>
<keyword id="KW-0812">Transmembrane</keyword>
<keyword id="KW-1133">Transmembrane helix</keyword>
<dbReference type="EMBL" id="AAMC01024493">
    <property type="status" value="NOT_ANNOTATED_CDS"/>
    <property type="molecule type" value="Genomic_DNA"/>
</dbReference>
<dbReference type="EMBL" id="AAMC01024494">
    <property type="status" value="NOT_ANNOTATED_CDS"/>
    <property type="molecule type" value="Genomic_DNA"/>
</dbReference>
<dbReference type="EMBL" id="AAMC01024495">
    <property type="status" value="NOT_ANNOTATED_CDS"/>
    <property type="molecule type" value="Genomic_DNA"/>
</dbReference>
<dbReference type="RefSeq" id="NP_001188271.1">
    <property type="nucleotide sequence ID" value="NM_001201342.1"/>
</dbReference>
<dbReference type="SMR" id="F7C0L1"/>
<dbReference type="STRING" id="8364.ENSXETP00000001168"/>
<dbReference type="PaxDb" id="8364-ENSXETP00000024385"/>
<dbReference type="KEGG" id="xtr:100495843"/>
<dbReference type="CTD" id="100495843"/>
<dbReference type="eggNOG" id="KOG3017">
    <property type="taxonomic scope" value="Eukaryota"/>
</dbReference>
<dbReference type="InParanoid" id="F7C0L1"/>
<dbReference type="OrthoDB" id="737510at2759"/>
<dbReference type="TreeFam" id="TF316148"/>
<dbReference type="Proteomes" id="UP000008143">
    <property type="component" value="Chromosome 5"/>
</dbReference>
<dbReference type="GO" id="GO:0005576">
    <property type="term" value="C:extracellular region"/>
    <property type="evidence" value="ECO:0007669"/>
    <property type="project" value="UniProtKB-SubCell"/>
</dbReference>
<dbReference type="GO" id="GO:0016020">
    <property type="term" value="C:membrane"/>
    <property type="evidence" value="ECO:0007669"/>
    <property type="project" value="UniProtKB-SubCell"/>
</dbReference>
<dbReference type="GO" id="GO:0006935">
    <property type="term" value="P:chemotaxis"/>
    <property type="evidence" value="ECO:0000314"/>
    <property type="project" value="UniProtKB"/>
</dbReference>
<dbReference type="FunFam" id="3.40.33.10:FF:000005">
    <property type="entry name" value="Cysteine-rich secretory protein 2"/>
    <property type="match status" value="1"/>
</dbReference>
<dbReference type="Gene3D" id="3.40.33.10">
    <property type="entry name" value="CAP"/>
    <property type="match status" value="1"/>
</dbReference>
<dbReference type="InterPro" id="IPR018244">
    <property type="entry name" value="Allrgn_V5/Tpx1_CS"/>
</dbReference>
<dbReference type="InterPro" id="IPR014044">
    <property type="entry name" value="CAP_dom"/>
</dbReference>
<dbReference type="InterPro" id="IPR035940">
    <property type="entry name" value="CAP_sf"/>
</dbReference>
<dbReference type="InterPro" id="IPR001283">
    <property type="entry name" value="CRISP-related"/>
</dbReference>
<dbReference type="InterPro" id="IPR002413">
    <property type="entry name" value="V5_allergen-like"/>
</dbReference>
<dbReference type="PANTHER" id="PTHR10334">
    <property type="entry name" value="CYSTEINE-RICH SECRETORY PROTEIN-RELATED"/>
    <property type="match status" value="1"/>
</dbReference>
<dbReference type="Pfam" id="PF00188">
    <property type="entry name" value="CAP"/>
    <property type="match status" value="1"/>
</dbReference>
<dbReference type="PRINTS" id="PR00838">
    <property type="entry name" value="V5ALLERGEN"/>
</dbReference>
<dbReference type="PRINTS" id="PR00837">
    <property type="entry name" value="V5TPXLIKE"/>
</dbReference>
<dbReference type="SMART" id="SM00198">
    <property type="entry name" value="SCP"/>
    <property type="match status" value="1"/>
</dbReference>
<dbReference type="SUPFAM" id="SSF55797">
    <property type="entry name" value="PR-1-like"/>
    <property type="match status" value="1"/>
</dbReference>
<dbReference type="PROSITE" id="PS01009">
    <property type="entry name" value="CRISP_1"/>
    <property type="match status" value="1"/>
</dbReference>
<reference key="1">
    <citation type="journal article" date="2008" name="Dev. Biol.">
        <title>Xenopus tropicalis allurin: expression, purification, and characterization of a sperm chemoattractant that exhibits cross-species activity.</title>
        <authorList>
            <person name="Burnett L.A."/>
            <person name="Boyles S."/>
            <person name="Spencer C."/>
            <person name="Bieber A.L."/>
            <person name="Chandler D.E."/>
        </authorList>
    </citation>
    <scope>NUCLEOTIDE SEQUENCE [MRNA]</scope>
    <scope>SUBCELLULAR LOCATION</scope>
    <scope>TISSUE SPECIFICITY</scope>
    <scope>FUNCTION</scope>
    <scope>IDENTIFICATION BY MASS SPECTROMETRY</scope>
</reference>
<reference key="2">
    <citation type="journal article" date="2010" name="Science">
        <title>The genome of the Western clawed frog Xenopus tropicalis.</title>
        <authorList>
            <person name="Hellsten U."/>
            <person name="Harland R.M."/>
            <person name="Gilchrist M.J."/>
            <person name="Hendrix D."/>
            <person name="Jurka J."/>
            <person name="Kapitonov V."/>
            <person name="Ovcharenko I."/>
            <person name="Putnam N.H."/>
            <person name="Shu S."/>
            <person name="Taher L."/>
            <person name="Blitz I.L."/>
            <person name="Blumberg B."/>
            <person name="Dichmann D.S."/>
            <person name="Dubchak I."/>
            <person name="Amaya E."/>
            <person name="Detter J.C."/>
            <person name="Fletcher R."/>
            <person name="Gerhard D.S."/>
            <person name="Goodstein D."/>
            <person name="Graves T."/>
            <person name="Grigoriev I.V."/>
            <person name="Grimwood J."/>
            <person name="Kawashima T."/>
            <person name="Lindquist E."/>
            <person name="Lucas S.M."/>
            <person name="Mead P.E."/>
            <person name="Mitros T."/>
            <person name="Ogino H."/>
            <person name="Ohta Y."/>
            <person name="Poliakov A.V."/>
            <person name="Pollet N."/>
            <person name="Robert J."/>
            <person name="Salamov A."/>
            <person name="Sater A.K."/>
            <person name="Schmutz J."/>
            <person name="Terry A."/>
            <person name="Vize P.D."/>
            <person name="Warren W.C."/>
            <person name="Wells D."/>
            <person name="Wills A."/>
            <person name="Wilson R.K."/>
            <person name="Zimmerman L.B."/>
            <person name="Zorn A.M."/>
            <person name="Grainger R."/>
            <person name="Grammer T."/>
            <person name="Khokha M.K."/>
            <person name="Richardson P.M."/>
            <person name="Rokhsar D.S."/>
        </authorList>
    </citation>
    <scope>NUCLEOTIDE SEQUENCE [LARGE SCALE GENOMIC DNA]</scope>
</reference>
<name>CRISA_XENTR</name>
<protein>
    <recommendedName>
        <fullName>Allurin</fullName>
    </recommendedName>
    <alternativeName>
        <fullName>Cysteine-rich secretory protein A</fullName>
        <shortName>CRISP-A</shortName>
    </alternativeName>
</protein>
<comment type="function">
    <text evidence="2">Involved in sperm chemoattraction.</text>
</comment>
<comment type="subcellular location">
    <subcellularLocation>
        <location evidence="3">Membrane</location>
    </subcellularLocation>
    <subcellularLocation>
        <location evidence="2">Secreted</location>
    </subcellularLocation>
</comment>
<comment type="tissue specificity">
    <text evidence="2">Expressed only in oviduct.</text>
</comment>
<comment type="similarity">
    <text evidence="3">Belongs to the CRISP family.</text>
</comment>
<accession>F7C0L1</accession>
<feature type="signal peptide" evidence="1">
    <location>
        <begin position="1"/>
        <end position="19"/>
    </location>
</feature>
<feature type="chain" id="PRO_0000418885" description="Allurin">
    <location>
        <begin position="20"/>
        <end position="204"/>
    </location>
</feature>
<feature type="transmembrane region" description="Helical" evidence="1">
    <location>
        <begin position="140"/>
        <end position="161"/>
    </location>
</feature>
<feature type="domain" description="SCP">
    <location>
        <begin position="36"/>
        <end position="138"/>
    </location>
</feature>